<name>RUTB_ECO7I</name>
<protein>
    <recommendedName>
        <fullName evidence="1">Ureidoacrylate amidohydrolase RutB</fullName>
        <ecNumber evidence="1">3.5.1.110</ecNumber>
    </recommendedName>
</protein>
<proteinExistence type="inferred from homology"/>
<feature type="chain" id="PRO_0000402683" description="Ureidoacrylate amidohydrolase RutB">
    <location>
        <begin position="1"/>
        <end position="230"/>
    </location>
</feature>
<feature type="active site" description="Proton acceptor" evidence="1">
    <location>
        <position position="24"/>
    </location>
</feature>
<feature type="active site" evidence="1">
    <location>
        <position position="133"/>
    </location>
</feature>
<feature type="active site" description="Nucleophile" evidence="1">
    <location>
        <position position="166"/>
    </location>
</feature>
<keyword id="KW-0378">Hydrolase</keyword>
<reference key="1">
    <citation type="journal article" date="2009" name="PLoS Genet.">
        <title>Organised genome dynamics in the Escherichia coli species results in highly diverse adaptive paths.</title>
        <authorList>
            <person name="Touchon M."/>
            <person name="Hoede C."/>
            <person name="Tenaillon O."/>
            <person name="Barbe V."/>
            <person name="Baeriswyl S."/>
            <person name="Bidet P."/>
            <person name="Bingen E."/>
            <person name="Bonacorsi S."/>
            <person name="Bouchier C."/>
            <person name="Bouvet O."/>
            <person name="Calteau A."/>
            <person name="Chiapello H."/>
            <person name="Clermont O."/>
            <person name="Cruveiller S."/>
            <person name="Danchin A."/>
            <person name="Diard M."/>
            <person name="Dossat C."/>
            <person name="Karoui M.E."/>
            <person name="Frapy E."/>
            <person name="Garry L."/>
            <person name="Ghigo J.M."/>
            <person name="Gilles A.M."/>
            <person name="Johnson J."/>
            <person name="Le Bouguenec C."/>
            <person name="Lescat M."/>
            <person name="Mangenot S."/>
            <person name="Martinez-Jehanne V."/>
            <person name="Matic I."/>
            <person name="Nassif X."/>
            <person name="Oztas S."/>
            <person name="Petit M.A."/>
            <person name="Pichon C."/>
            <person name="Rouy Z."/>
            <person name="Ruf C.S."/>
            <person name="Schneider D."/>
            <person name="Tourret J."/>
            <person name="Vacherie B."/>
            <person name="Vallenet D."/>
            <person name="Medigue C."/>
            <person name="Rocha E.P.C."/>
            <person name="Denamur E."/>
        </authorList>
    </citation>
    <scope>NUCLEOTIDE SEQUENCE [LARGE SCALE GENOMIC DNA]</scope>
    <source>
        <strain>IAI39 / ExPEC</strain>
    </source>
</reference>
<gene>
    <name evidence="1" type="primary">rutB</name>
    <name type="ordered locus">ECIAI39_2144</name>
</gene>
<comment type="function">
    <text evidence="1">Hydrolyzes ureidoacrylate to form aminoacrylate and carbamate. The carbamate hydrolyzes spontaneously, thereby releasing one of the nitrogen atoms of the pyrimidine ring as ammonia and one of its carbon atoms as CO2.</text>
</comment>
<comment type="catalytic activity">
    <reaction evidence="1">
        <text>(Z)-3-ureidoacrylate + H2O + H(+) = (Z)-3-aminoacrylate + NH4(+) + CO2</text>
        <dbReference type="Rhea" id="RHEA:42624"/>
        <dbReference type="ChEBI" id="CHEBI:15377"/>
        <dbReference type="ChEBI" id="CHEBI:15378"/>
        <dbReference type="ChEBI" id="CHEBI:16526"/>
        <dbReference type="ChEBI" id="CHEBI:28938"/>
        <dbReference type="ChEBI" id="CHEBI:59891"/>
        <dbReference type="ChEBI" id="CHEBI:59894"/>
        <dbReference type="EC" id="3.5.1.110"/>
    </reaction>
</comment>
<comment type="catalytic activity">
    <reaction evidence="1">
        <text>(Z)-3-ureidoacrylate + H2O = (Z)-3-aminoacrylate + carbamate + H(+)</text>
        <dbReference type="Rhea" id="RHEA:31603"/>
        <dbReference type="ChEBI" id="CHEBI:13941"/>
        <dbReference type="ChEBI" id="CHEBI:15377"/>
        <dbReference type="ChEBI" id="CHEBI:15378"/>
        <dbReference type="ChEBI" id="CHEBI:59891"/>
        <dbReference type="ChEBI" id="CHEBI:59894"/>
    </reaction>
</comment>
<comment type="catalytic activity">
    <reaction evidence="1">
        <text>(Z)-2-methylureidoacrylate + H2O + H(+) = (Z)-2-methylaminoacrylate + NH4(+) + CO2</text>
        <dbReference type="Rhea" id="RHEA:42620"/>
        <dbReference type="ChEBI" id="CHEBI:15377"/>
        <dbReference type="ChEBI" id="CHEBI:15378"/>
        <dbReference type="ChEBI" id="CHEBI:16526"/>
        <dbReference type="ChEBI" id="CHEBI:28938"/>
        <dbReference type="ChEBI" id="CHEBI:143783"/>
        <dbReference type="ChEBI" id="CHEBI:145735"/>
        <dbReference type="EC" id="3.5.1.110"/>
    </reaction>
</comment>
<comment type="induction">
    <text evidence="1">Up-regulated by the nitrogen regulatory protein C (NtrC also called GlnG) and repressed by RutR.</text>
</comment>
<comment type="similarity">
    <text evidence="1">Belongs to the isochorismatase family. RutB subfamily.</text>
</comment>
<dbReference type="EC" id="3.5.1.110" evidence="1"/>
<dbReference type="EMBL" id="CU928164">
    <property type="protein sequence ID" value="CAR18271.1"/>
    <property type="molecule type" value="Genomic_DNA"/>
</dbReference>
<dbReference type="RefSeq" id="WP_012602395.1">
    <property type="nucleotide sequence ID" value="NC_011750.1"/>
</dbReference>
<dbReference type="RefSeq" id="YP_002408107.1">
    <property type="nucleotide sequence ID" value="NC_011750.1"/>
</dbReference>
<dbReference type="SMR" id="B7NLB5"/>
<dbReference type="STRING" id="585057.ECIAI39_2144"/>
<dbReference type="KEGG" id="ect:ECIAI39_2144"/>
<dbReference type="PATRIC" id="fig|585057.6.peg.2232"/>
<dbReference type="HOGENOM" id="CLU_068979_8_0_6"/>
<dbReference type="Proteomes" id="UP000000749">
    <property type="component" value="Chromosome"/>
</dbReference>
<dbReference type="GO" id="GO:0016811">
    <property type="term" value="F:hydrolase activity, acting on carbon-nitrogen (but not peptide) bonds, in linear amides"/>
    <property type="evidence" value="ECO:0007669"/>
    <property type="project" value="UniProtKB-UniRule"/>
</dbReference>
<dbReference type="GO" id="GO:0019740">
    <property type="term" value="P:nitrogen utilization"/>
    <property type="evidence" value="ECO:0007669"/>
    <property type="project" value="UniProtKB-UniRule"/>
</dbReference>
<dbReference type="GO" id="GO:0006212">
    <property type="term" value="P:uracil catabolic process"/>
    <property type="evidence" value="ECO:0007669"/>
    <property type="project" value="UniProtKB-UniRule"/>
</dbReference>
<dbReference type="CDD" id="cd00431">
    <property type="entry name" value="cysteine_hydrolases"/>
    <property type="match status" value="1"/>
</dbReference>
<dbReference type="FunFam" id="3.40.50.850:FF:000004">
    <property type="entry name" value="Peroxyureidoacrylate/ureidoacrylate amidohydrolase RutB"/>
    <property type="match status" value="1"/>
</dbReference>
<dbReference type="Gene3D" id="3.40.50.850">
    <property type="entry name" value="Isochorismatase-like"/>
    <property type="match status" value="1"/>
</dbReference>
<dbReference type="HAMAP" id="MF_00830">
    <property type="entry name" value="RutB"/>
    <property type="match status" value="1"/>
</dbReference>
<dbReference type="InterPro" id="IPR000868">
    <property type="entry name" value="Isochorismatase-like_dom"/>
</dbReference>
<dbReference type="InterPro" id="IPR050272">
    <property type="entry name" value="Isochorismatase-like_hydrls"/>
</dbReference>
<dbReference type="InterPro" id="IPR036380">
    <property type="entry name" value="Isochorismatase-like_sf"/>
</dbReference>
<dbReference type="InterPro" id="IPR019916">
    <property type="entry name" value="RutB"/>
</dbReference>
<dbReference type="NCBIfam" id="TIGR03614">
    <property type="entry name" value="RutB"/>
    <property type="match status" value="1"/>
</dbReference>
<dbReference type="PANTHER" id="PTHR43540:SF6">
    <property type="entry name" value="ISOCHORISMATASE-LIKE DOMAIN-CONTAINING PROTEIN"/>
    <property type="match status" value="1"/>
</dbReference>
<dbReference type="PANTHER" id="PTHR43540">
    <property type="entry name" value="PEROXYUREIDOACRYLATE/UREIDOACRYLATE AMIDOHYDROLASE-RELATED"/>
    <property type="match status" value="1"/>
</dbReference>
<dbReference type="Pfam" id="PF00857">
    <property type="entry name" value="Isochorismatase"/>
    <property type="match status" value="1"/>
</dbReference>
<dbReference type="SUPFAM" id="SSF52499">
    <property type="entry name" value="Isochorismatase-like hydrolases"/>
    <property type="match status" value="1"/>
</dbReference>
<accession>B7NLB5</accession>
<organism>
    <name type="scientific">Escherichia coli O7:K1 (strain IAI39 / ExPEC)</name>
    <dbReference type="NCBI Taxonomy" id="585057"/>
    <lineage>
        <taxon>Bacteria</taxon>
        <taxon>Pseudomonadati</taxon>
        <taxon>Pseudomonadota</taxon>
        <taxon>Gammaproteobacteria</taxon>
        <taxon>Enterobacterales</taxon>
        <taxon>Enterobacteriaceae</taxon>
        <taxon>Escherichia</taxon>
    </lineage>
</organism>
<sequence length="230" mass="25215">MTTLTARPEAITFDPQQTALIVVDMQNAYATPGGYLDLAGFDVSTTRPVIANIQTAVTAARAAGMLIIWFQNGWDAQYVEAGGPGSPNFHKSNALKTMRKQPQLQGKLLAKGSWDYQLVDELVPQPGDIVLPKPRYSSFFNTPLDSILRSRGIRHLVFTGIATNVCVESTLRDGFFLEYFGVVLEDATHQAGPEFAQKAALFNIETFFGWVSDVETFCDALSPTSFARIA</sequence>
<evidence type="ECO:0000255" key="1">
    <source>
        <dbReference type="HAMAP-Rule" id="MF_00830"/>
    </source>
</evidence>